<gene>
    <name evidence="1" type="primary">cca</name>
    <name type="ordered locus">Asuc_1075</name>
</gene>
<reference key="1">
    <citation type="journal article" date="2010" name="BMC Genomics">
        <title>A genomic perspective on the potential of Actinobacillus succinogenes for industrial succinate production.</title>
        <authorList>
            <person name="McKinlay J.B."/>
            <person name="Laivenieks M."/>
            <person name="Schindler B.D."/>
            <person name="McKinlay A.A."/>
            <person name="Siddaramappa S."/>
            <person name="Challacombe J.F."/>
            <person name="Lowry S.R."/>
            <person name="Clum A."/>
            <person name="Lapidus A.L."/>
            <person name="Burkhart K.B."/>
            <person name="Harkins V."/>
            <person name="Vieille C."/>
        </authorList>
    </citation>
    <scope>NUCLEOTIDE SEQUENCE [LARGE SCALE GENOMIC DNA]</scope>
    <source>
        <strain>ATCC 55618 / DSM 22257 / CCUG 43843 / 130Z</strain>
    </source>
</reference>
<comment type="function">
    <text evidence="1">Catalyzes the addition and repair of the essential 3'-terminal CCA sequence in tRNAs without using a nucleic acid template. Adds these three nucleotides in the order of C, C, and A to the tRNA nucleotide-73, using CTP and ATP as substrates and producing inorganic pyrophosphate. tRNA 3'-terminal CCA addition is required both for tRNA processing and repair. Also involved in tRNA surveillance by mediating tandem CCA addition to generate a CCACCA at the 3' terminus of unstable tRNAs. While stable tRNAs receive only 3'-terminal CCA, unstable tRNAs are marked with CCACCA and rapidly degraded.</text>
</comment>
<comment type="catalytic activity">
    <reaction evidence="1">
        <text>a tRNA precursor + 2 CTP + ATP = a tRNA with a 3' CCA end + 3 diphosphate</text>
        <dbReference type="Rhea" id="RHEA:14433"/>
        <dbReference type="Rhea" id="RHEA-COMP:10465"/>
        <dbReference type="Rhea" id="RHEA-COMP:10468"/>
        <dbReference type="ChEBI" id="CHEBI:30616"/>
        <dbReference type="ChEBI" id="CHEBI:33019"/>
        <dbReference type="ChEBI" id="CHEBI:37563"/>
        <dbReference type="ChEBI" id="CHEBI:74896"/>
        <dbReference type="ChEBI" id="CHEBI:83071"/>
        <dbReference type="EC" id="2.7.7.72"/>
    </reaction>
</comment>
<comment type="catalytic activity">
    <reaction evidence="1">
        <text>a tRNA with a 3' CCA end + 2 CTP + ATP = a tRNA with a 3' CCACCA end + 3 diphosphate</text>
        <dbReference type="Rhea" id="RHEA:76235"/>
        <dbReference type="Rhea" id="RHEA-COMP:10468"/>
        <dbReference type="Rhea" id="RHEA-COMP:18655"/>
        <dbReference type="ChEBI" id="CHEBI:30616"/>
        <dbReference type="ChEBI" id="CHEBI:33019"/>
        <dbReference type="ChEBI" id="CHEBI:37563"/>
        <dbReference type="ChEBI" id="CHEBI:83071"/>
        <dbReference type="ChEBI" id="CHEBI:195187"/>
    </reaction>
    <physiologicalReaction direction="left-to-right" evidence="1">
        <dbReference type="Rhea" id="RHEA:76236"/>
    </physiologicalReaction>
</comment>
<comment type="cofactor">
    <cofactor evidence="1">
        <name>Mg(2+)</name>
        <dbReference type="ChEBI" id="CHEBI:18420"/>
    </cofactor>
</comment>
<comment type="miscellaneous">
    <text evidence="1">A single active site specifically recognizes both ATP and CTP and is responsible for their addition.</text>
</comment>
<comment type="similarity">
    <text evidence="1">Belongs to the tRNA nucleotidyltransferase/poly(A) polymerase family. Bacterial CCA-adding enzyme type 2 subfamily.</text>
</comment>
<evidence type="ECO:0000255" key="1">
    <source>
        <dbReference type="HAMAP-Rule" id="MF_01262"/>
    </source>
</evidence>
<evidence type="ECO:0000255" key="2">
    <source>
        <dbReference type="PROSITE-ProRule" id="PRU01175"/>
    </source>
</evidence>
<organism>
    <name type="scientific">Actinobacillus succinogenes (strain ATCC 55618 / DSM 22257 / CCUG 43843 / 130Z)</name>
    <dbReference type="NCBI Taxonomy" id="339671"/>
    <lineage>
        <taxon>Bacteria</taxon>
        <taxon>Pseudomonadati</taxon>
        <taxon>Pseudomonadota</taxon>
        <taxon>Gammaproteobacteria</taxon>
        <taxon>Pasteurellales</taxon>
        <taxon>Pasteurellaceae</taxon>
        <taxon>Actinobacillus</taxon>
    </lineage>
</organism>
<dbReference type="EC" id="2.7.7.72" evidence="1"/>
<dbReference type="EMBL" id="CP000746">
    <property type="protein sequence ID" value="ABR74441.1"/>
    <property type="molecule type" value="Genomic_DNA"/>
</dbReference>
<dbReference type="RefSeq" id="WP_012072818.1">
    <property type="nucleotide sequence ID" value="NC_009655.1"/>
</dbReference>
<dbReference type="SMR" id="A6VN94"/>
<dbReference type="STRING" id="339671.Asuc_1075"/>
<dbReference type="KEGG" id="asu:Asuc_1075"/>
<dbReference type="eggNOG" id="COG0617">
    <property type="taxonomic scope" value="Bacteria"/>
</dbReference>
<dbReference type="HOGENOM" id="CLU_015961_1_1_6"/>
<dbReference type="OrthoDB" id="9805698at2"/>
<dbReference type="Proteomes" id="UP000001114">
    <property type="component" value="Chromosome"/>
</dbReference>
<dbReference type="GO" id="GO:0005524">
    <property type="term" value="F:ATP binding"/>
    <property type="evidence" value="ECO:0007669"/>
    <property type="project" value="UniProtKB-UniRule"/>
</dbReference>
<dbReference type="GO" id="GO:0004810">
    <property type="term" value="F:CCA tRNA nucleotidyltransferase activity"/>
    <property type="evidence" value="ECO:0007669"/>
    <property type="project" value="UniProtKB-UniRule"/>
</dbReference>
<dbReference type="GO" id="GO:0000287">
    <property type="term" value="F:magnesium ion binding"/>
    <property type="evidence" value="ECO:0007669"/>
    <property type="project" value="UniProtKB-UniRule"/>
</dbReference>
<dbReference type="GO" id="GO:0000049">
    <property type="term" value="F:tRNA binding"/>
    <property type="evidence" value="ECO:0007669"/>
    <property type="project" value="UniProtKB-UniRule"/>
</dbReference>
<dbReference type="GO" id="GO:0042245">
    <property type="term" value="P:RNA repair"/>
    <property type="evidence" value="ECO:0007669"/>
    <property type="project" value="UniProtKB-KW"/>
</dbReference>
<dbReference type="GO" id="GO:0001680">
    <property type="term" value="P:tRNA 3'-terminal CCA addition"/>
    <property type="evidence" value="ECO:0007669"/>
    <property type="project" value="UniProtKB-UniRule"/>
</dbReference>
<dbReference type="CDD" id="cd05398">
    <property type="entry name" value="NT_ClassII-CCAase"/>
    <property type="match status" value="1"/>
</dbReference>
<dbReference type="Gene3D" id="3.30.460.10">
    <property type="entry name" value="Beta Polymerase, domain 2"/>
    <property type="match status" value="1"/>
</dbReference>
<dbReference type="Gene3D" id="1.10.3090.10">
    <property type="entry name" value="cca-adding enzyme, domain 2"/>
    <property type="match status" value="1"/>
</dbReference>
<dbReference type="HAMAP" id="MF_01262">
    <property type="entry name" value="CCA_bact_type2"/>
    <property type="match status" value="1"/>
</dbReference>
<dbReference type="InterPro" id="IPR012006">
    <property type="entry name" value="CCA_bact"/>
</dbReference>
<dbReference type="InterPro" id="IPR006674">
    <property type="entry name" value="HD_domain"/>
</dbReference>
<dbReference type="InterPro" id="IPR043519">
    <property type="entry name" value="NT_sf"/>
</dbReference>
<dbReference type="InterPro" id="IPR002646">
    <property type="entry name" value="PolA_pol_head_dom"/>
</dbReference>
<dbReference type="InterPro" id="IPR032828">
    <property type="entry name" value="PolyA_RNA-bd"/>
</dbReference>
<dbReference type="InterPro" id="IPR050124">
    <property type="entry name" value="tRNA_CCA-adding_enzyme"/>
</dbReference>
<dbReference type="NCBIfam" id="NF008137">
    <property type="entry name" value="PRK10885.1"/>
    <property type="match status" value="1"/>
</dbReference>
<dbReference type="PANTHER" id="PTHR47545">
    <property type="entry name" value="MULTIFUNCTIONAL CCA PROTEIN"/>
    <property type="match status" value="1"/>
</dbReference>
<dbReference type="PANTHER" id="PTHR47545:SF1">
    <property type="entry name" value="MULTIFUNCTIONAL CCA PROTEIN"/>
    <property type="match status" value="1"/>
</dbReference>
<dbReference type="Pfam" id="PF01743">
    <property type="entry name" value="PolyA_pol"/>
    <property type="match status" value="1"/>
</dbReference>
<dbReference type="Pfam" id="PF12627">
    <property type="entry name" value="PolyA_pol_RNAbd"/>
    <property type="match status" value="1"/>
</dbReference>
<dbReference type="PIRSF" id="PIRSF000813">
    <property type="entry name" value="CCA_bact"/>
    <property type="match status" value="1"/>
</dbReference>
<dbReference type="SUPFAM" id="SSF81301">
    <property type="entry name" value="Nucleotidyltransferase"/>
    <property type="match status" value="1"/>
</dbReference>
<dbReference type="SUPFAM" id="SSF81891">
    <property type="entry name" value="Poly A polymerase C-terminal region-like"/>
    <property type="match status" value="1"/>
</dbReference>
<dbReference type="PROSITE" id="PS51831">
    <property type="entry name" value="HD"/>
    <property type="match status" value="1"/>
</dbReference>
<proteinExistence type="inferred from homology"/>
<name>CCA_ACTSZ</name>
<accession>A6VN94</accession>
<sequence length="400" mass="45888">MNIYLVGGAVRDQLLHLPVKDRDWLVVGSTPDELLSLGYLQVGKDFPVFIHPETHEEYALARTEKKSGSGYTGFICDFSPDITLEDDLIRRDLTINAIAQDKNGKLYDPYHGIEDLNNRLLRHISPSFEEDPLRVLRVARFAAKFYHLGFAIAPETLELMKKLSTQGELQHLTAERVWLETEKALMTENPEIYFQTLLKIDALPALMPELATISVENFQYAMTALKNAVSLIKNMDCNKSAVCFATIFLGIIYVNPSHMTQKQQEQDNHQKNITPCLFEKLKVPAYHKELAILAGKYHIYIHNAFNLKSHTIIDLFNKWDVWRKPQRFLELLIVCAAHYSAQSKNQPTYPQKSYLLGLYQKAMTIDVKNIVSAGFKKTEIRNELTRQRISAVEKIKNCYP</sequence>
<feature type="chain" id="PRO_1000073180" description="CCA-adding enzyme">
    <location>
        <begin position="1"/>
        <end position="400"/>
    </location>
</feature>
<feature type="domain" description="HD" evidence="2">
    <location>
        <begin position="217"/>
        <end position="322"/>
    </location>
</feature>
<feature type="binding site" evidence="1">
    <location>
        <position position="8"/>
    </location>
    <ligand>
        <name>ATP</name>
        <dbReference type="ChEBI" id="CHEBI:30616"/>
    </ligand>
</feature>
<feature type="binding site" evidence="1">
    <location>
        <position position="8"/>
    </location>
    <ligand>
        <name>CTP</name>
        <dbReference type="ChEBI" id="CHEBI:37563"/>
    </ligand>
</feature>
<feature type="binding site" evidence="1">
    <location>
        <position position="11"/>
    </location>
    <ligand>
        <name>ATP</name>
        <dbReference type="ChEBI" id="CHEBI:30616"/>
    </ligand>
</feature>
<feature type="binding site" evidence="1">
    <location>
        <position position="11"/>
    </location>
    <ligand>
        <name>CTP</name>
        <dbReference type="ChEBI" id="CHEBI:37563"/>
    </ligand>
</feature>
<feature type="binding site" evidence="1">
    <location>
        <position position="21"/>
    </location>
    <ligand>
        <name>Mg(2+)</name>
        <dbReference type="ChEBI" id="CHEBI:18420"/>
    </ligand>
</feature>
<feature type="binding site" evidence="1">
    <location>
        <position position="23"/>
    </location>
    <ligand>
        <name>Mg(2+)</name>
        <dbReference type="ChEBI" id="CHEBI:18420"/>
    </ligand>
</feature>
<feature type="binding site" evidence="1">
    <location>
        <position position="91"/>
    </location>
    <ligand>
        <name>ATP</name>
        <dbReference type="ChEBI" id="CHEBI:30616"/>
    </ligand>
</feature>
<feature type="binding site" evidence="1">
    <location>
        <position position="91"/>
    </location>
    <ligand>
        <name>CTP</name>
        <dbReference type="ChEBI" id="CHEBI:37563"/>
    </ligand>
</feature>
<feature type="binding site" evidence="1">
    <location>
        <position position="137"/>
    </location>
    <ligand>
        <name>ATP</name>
        <dbReference type="ChEBI" id="CHEBI:30616"/>
    </ligand>
</feature>
<feature type="binding site" evidence="1">
    <location>
        <position position="137"/>
    </location>
    <ligand>
        <name>CTP</name>
        <dbReference type="ChEBI" id="CHEBI:37563"/>
    </ligand>
</feature>
<feature type="binding site" evidence="1">
    <location>
        <position position="140"/>
    </location>
    <ligand>
        <name>ATP</name>
        <dbReference type="ChEBI" id="CHEBI:30616"/>
    </ligand>
</feature>
<feature type="binding site" evidence="1">
    <location>
        <position position="140"/>
    </location>
    <ligand>
        <name>CTP</name>
        <dbReference type="ChEBI" id="CHEBI:37563"/>
    </ligand>
</feature>
<keyword id="KW-0067">ATP-binding</keyword>
<keyword id="KW-0460">Magnesium</keyword>
<keyword id="KW-0479">Metal-binding</keyword>
<keyword id="KW-0547">Nucleotide-binding</keyword>
<keyword id="KW-0548">Nucleotidyltransferase</keyword>
<keyword id="KW-1185">Reference proteome</keyword>
<keyword id="KW-0692">RNA repair</keyword>
<keyword id="KW-0694">RNA-binding</keyword>
<keyword id="KW-0808">Transferase</keyword>
<keyword id="KW-0819">tRNA processing</keyword>
<protein>
    <recommendedName>
        <fullName evidence="1">CCA-adding enzyme</fullName>
        <ecNumber evidence="1">2.7.7.72</ecNumber>
    </recommendedName>
    <alternativeName>
        <fullName evidence="1">CCA tRNA nucleotidyltransferase</fullName>
    </alternativeName>
    <alternativeName>
        <fullName evidence="1">tRNA CCA-pyrophosphorylase</fullName>
    </alternativeName>
    <alternativeName>
        <fullName evidence="1">tRNA adenylyl-/cytidylyl- transferase</fullName>
    </alternativeName>
    <alternativeName>
        <fullName evidence="1">tRNA nucleotidyltransferase</fullName>
    </alternativeName>
    <alternativeName>
        <fullName evidence="1">tRNA-NT</fullName>
    </alternativeName>
</protein>